<dbReference type="EC" id="2.7.7.27" evidence="1"/>
<dbReference type="EMBL" id="CP000114">
    <property type="protein sequence ID" value="ABA45112.1"/>
    <property type="molecule type" value="Genomic_DNA"/>
</dbReference>
<dbReference type="RefSeq" id="WP_000787290.1">
    <property type="nucleotide sequence ID" value="NC_007432.1"/>
</dbReference>
<dbReference type="SMR" id="Q3K1K4"/>
<dbReference type="KEGG" id="sak:SAK_0977"/>
<dbReference type="HOGENOM" id="CLU_029499_14_0_9"/>
<dbReference type="UniPathway" id="UPA00164"/>
<dbReference type="GO" id="GO:0005524">
    <property type="term" value="F:ATP binding"/>
    <property type="evidence" value="ECO:0007669"/>
    <property type="project" value="UniProtKB-KW"/>
</dbReference>
<dbReference type="GO" id="GO:0008878">
    <property type="term" value="F:glucose-1-phosphate adenylyltransferase activity"/>
    <property type="evidence" value="ECO:0007669"/>
    <property type="project" value="UniProtKB-UniRule"/>
</dbReference>
<dbReference type="GO" id="GO:0005978">
    <property type="term" value="P:glycogen biosynthetic process"/>
    <property type="evidence" value="ECO:0007669"/>
    <property type="project" value="UniProtKB-UniRule"/>
</dbReference>
<dbReference type="CDD" id="cd02508">
    <property type="entry name" value="ADP_Glucose_PP"/>
    <property type="match status" value="1"/>
</dbReference>
<dbReference type="CDD" id="cd04651">
    <property type="entry name" value="LbH_G1P_AT_C"/>
    <property type="match status" value="1"/>
</dbReference>
<dbReference type="Gene3D" id="2.160.10.10">
    <property type="entry name" value="Hexapeptide repeat proteins"/>
    <property type="match status" value="1"/>
</dbReference>
<dbReference type="Gene3D" id="3.90.550.10">
    <property type="entry name" value="Spore Coat Polysaccharide Biosynthesis Protein SpsA, Chain A"/>
    <property type="match status" value="1"/>
</dbReference>
<dbReference type="HAMAP" id="MF_00624">
    <property type="entry name" value="GlgC"/>
    <property type="match status" value="1"/>
</dbReference>
<dbReference type="InterPro" id="IPR011831">
    <property type="entry name" value="ADP-Glc_PPase"/>
</dbReference>
<dbReference type="InterPro" id="IPR005836">
    <property type="entry name" value="ADP_Glu_pyroP_CS"/>
</dbReference>
<dbReference type="InterPro" id="IPR023049">
    <property type="entry name" value="GlgC_bac"/>
</dbReference>
<dbReference type="InterPro" id="IPR056818">
    <property type="entry name" value="GlmU/GlgC-like_hexapep"/>
</dbReference>
<dbReference type="InterPro" id="IPR005835">
    <property type="entry name" value="NTP_transferase_dom"/>
</dbReference>
<dbReference type="InterPro" id="IPR029044">
    <property type="entry name" value="Nucleotide-diphossugar_trans"/>
</dbReference>
<dbReference type="InterPro" id="IPR011004">
    <property type="entry name" value="Trimer_LpxA-like_sf"/>
</dbReference>
<dbReference type="NCBIfam" id="TIGR02091">
    <property type="entry name" value="glgC"/>
    <property type="match status" value="1"/>
</dbReference>
<dbReference type="NCBIfam" id="NF003670">
    <property type="entry name" value="PRK05293.1"/>
    <property type="match status" value="1"/>
</dbReference>
<dbReference type="PANTHER" id="PTHR43523:SF2">
    <property type="entry name" value="GLUCOSE-1-PHOSPHATE ADENYLYLTRANSFERASE"/>
    <property type="match status" value="1"/>
</dbReference>
<dbReference type="PANTHER" id="PTHR43523">
    <property type="entry name" value="GLUCOSE-1-PHOSPHATE ADENYLYLTRANSFERASE-RELATED"/>
    <property type="match status" value="1"/>
</dbReference>
<dbReference type="Pfam" id="PF24894">
    <property type="entry name" value="Hexapep_GlmU"/>
    <property type="match status" value="1"/>
</dbReference>
<dbReference type="Pfam" id="PF00483">
    <property type="entry name" value="NTP_transferase"/>
    <property type="match status" value="1"/>
</dbReference>
<dbReference type="SUPFAM" id="SSF53448">
    <property type="entry name" value="Nucleotide-diphospho-sugar transferases"/>
    <property type="match status" value="1"/>
</dbReference>
<dbReference type="SUPFAM" id="SSF51161">
    <property type="entry name" value="Trimeric LpxA-like enzymes"/>
    <property type="match status" value="1"/>
</dbReference>
<dbReference type="PROSITE" id="PS00808">
    <property type="entry name" value="ADP_GLC_PYROPHOSPH_1"/>
    <property type="match status" value="1"/>
</dbReference>
<dbReference type="PROSITE" id="PS00809">
    <property type="entry name" value="ADP_GLC_PYROPHOSPH_2"/>
    <property type="match status" value="1"/>
</dbReference>
<dbReference type="PROSITE" id="PS00810">
    <property type="entry name" value="ADP_GLC_PYROPHOSPH_3"/>
    <property type="match status" value="1"/>
</dbReference>
<comment type="function">
    <text evidence="1">Involved in the biosynthesis of ADP-glucose, a building block required for the elongation reactions to produce glycogen. Catalyzes the reaction between ATP and alpha-D-glucose 1-phosphate (G1P) to produce pyrophosphate and ADP-Glc.</text>
</comment>
<comment type="catalytic activity">
    <reaction evidence="1">
        <text>alpha-D-glucose 1-phosphate + ATP + H(+) = ADP-alpha-D-glucose + diphosphate</text>
        <dbReference type="Rhea" id="RHEA:12120"/>
        <dbReference type="ChEBI" id="CHEBI:15378"/>
        <dbReference type="ChEBI" id="CHEBI:30616"/>
        <dbReference type="ChEBI" id="CHEBI:33019"/>
        <dbReference type="ChEBI" id="CHEBI:57498"/>
        <dbReference type="ChEBI" id="CHEBI:58601"/>
        <dbReference type="EC" id="2.7.7.27"/>
    </reaction>
</comment>
<comment type="pathway">
    <text evidence="1">Glycan biosynthesis; glycogen biosynthesis.</text>
</comment>
<comment type="subunit">
    <text evidence="1">Homotetramer.</text>
</comment>
<comment type="similarity">
    <text evidence="1">Belongs to the bacterial/plant glucose-1-phosphate adenylyltransferase family.</text>
</comment>
<gene>
    <name evidence="1" type="primary">glgC</name>
    <name type="ordered locus">SAK_0977</name>
</gene>
<protein>
    <recommendedName>
        <fullName evidence="1">Glucose-1-phosphate adenylyltransferase</fullName>
        <ecNumber evidence="1">2.7.7.27</ecNumber>
    </recommendedName>
    <alternativeName>
        <fullName evidence="1">ADP-glucose pyrophosphorylase</fullName>
        <shortName evidence="1">ADPGlc PPase</shortName>
    </alternativeName>
    <alternativeName>
        <fullName evidence="1">ADP-glucose synthase</fullName>
    </alternativeName>
</protein>
<proteinExistence type="inferred from homology"/>
<evidence type="ECO:0000255" key="1">
    <source>
        <dbReference type="HAMAP-Rule" id="MF_00624"/>
    </source>
</evidence>
<sequence>MKNEMLALILAGGQGTRLGKLTQSIAKPAVQFGGRYRIIDFALSNCANSGINNVGVITQYQPLELNTHIGNGSSWGLDGIDSGVTVLQPYSATEGNRWFQGTSHAIYQNIDYIDRINPEYVLILSGDHIYKMNYDDMLQTHKDNLASLTVAVLDVPLKEASRFGIMNTDSNDRIVEFEEKPEHPKSTKASMGIYIFDWKRLRTVLIDGEKNGIDMSDFGKNVIPAYLESGERVYTYNFDGYWKDVGTIESLWEANMEYIGEDNKLHSRDRSWKIYSKNLIAPPNFMTEDANVKDSLVVDGCFVAGNVEHSILSTNVQVKPNAIIKDSFVMSGATIGEGAKINRAIIGEDAVIGDGVVIDGSKEVEVIGYKEVAGVPNED</sequence>
<keyword id="KW-0067">ATP-binding</keyword>
<keyword id="KW-0119">Carbohydrate metabolism</keyword>
<keyword id="KW-0320">Glycogen biosynthesis</keyword>
<keyword id="KW-0321">Glycogen metabolism</keyword>
<keyword id="KW-0547">Nucleotide-binding</keyword>
<keyword id="KW-0548">Nucleotidyltransferase</keyword>
<keyword id="KW-0808">Transferase</keyword>
<name>GLGC_STRA1</name>
<feature type="chain" id="PRO_0000261903" description="Glucose-1-phosphate adenylyltransferase">
    <location>
        <begin position="1"/>
        <end position="379"/>
    </location>
</feature>
<feature type="binding site" evidence="1">
    <location>
        <position position="164"/>
    </location>
    <ligand>
        <name>alpha-D-glucose 1-phosphate</name>
        <dbReference type="ChEBI" id="CHEBI:58601"/>
    </ligand>
</feature>
<feature type="binding site" evidence="1">
    <location>
        <begin position="179"/>
        <end position="180"/>
    </location>
    <ligand>
        <name>alpha-D-glucose 1-phosphate</name>
        <dbReference type="ChEBI" id="CHEBI:58601"/>
    </ligand>
</feature>
<feature type="binding site" evidence="1">
    <location>
        <position position="190"/>
    </location>
    <ligand>
        <name>alpha-D-glucose 1-phosphate</name>
        <dbReference type="ChEBI" id="CHEBI:58601"/>
    </ligand>
</feature>
<reference key="1">
    <citation type="journal article" date="2005" name="Proc. Natl. Acad. Sci. U.S.A.">
        <title>Genome analysis of multiple pathogenic isolates of Streptococcus agalactiae: implications for the microbial 'pan-genome'.</title>
        <authorList>
            <person name="Tettelin H."/>
            <person name="Masignani V."/>
            <person name="Cieslewicz M.J."/>
            <person name="Donati C."/>
            <person name="Medini D."/>
            <person name="Ward N.L."/>
            <person name="Angiuoli S.V."/>
            <person name="Crabtree J."/>
            <person name="Jones A.L."/>
            <person name="Durkin A.S."/>
            <person name="DeBoy R.T."/>
            <person name="Davidsen T.M."/>
            <person name="Mora M."/>
            <person name="Scarselli M."/>
            <person name="Margarit y Ros I."/>
            <person name="Peterson J.D."/>
            <person name="Hauser C.R."/>
            <person name="Sundaram J.P."/>
            <person name="Nelson W.C."/>
            <person name="Madupu R."/>
            <person name="Brinkac L.M."/>
            <person name="Dodson R.J."/>
            <person name="Rosovitz M.J."/>
            <person name="Sullivan S.A."/>
            <person name="Daugherty S.C."/>
            <person name="Haft D.H."/>
            <person name="Selengut J."/>
            <person name="Gwinn M.L."/>
            <person name="Zhou L."/>
            <person name="Zafar N."/>
            <person name="Khouri H."/>
            <person name="Radune D."/>
            <person name="Dimitrov G."/>
            <person name="Watkins K."/>
            <person name="O'Connor K.J."/>
            <person name="Smith S."/>
            <person name="Utterback T.R."/>
            <person name="White O."/>
            <person name="Rubens C.E."/>
            <person name="Grandi G."/>
            <person name="Madoff L.C."/>
            <person name="Kasper D.L."/>
            <person name="Telford J.L."/>
            <person name="Wessels M.R."/>
            <person name="Rappuoli R."/>
            <person name="Fraser C.M."/>
        </authorList>
    </citation>
    <scope>NUCLEOTIDE SEQUENCE [LARGE SCALE GENOMIC DNA]</scope>
    <source>
        <strain>ATCC 27591 / A909 / CDC SS700</strain>
    </source>
</reference>
<accession>Q3K1K4</accession>
<organism>
    <name type="scientific">Streptococcus agalactiae serotype Ia (strain ATCC 27591 / A909 / CDC SS700)</name>
    <dbReference type="NCBI Taxonomy" id="205921"/>
    <lineage>
        <taxon>Bacteria</taxon>
        <taxon>Bacillati</taxon>
        <taxon>Bacillota</taxon>
        <taxon>Bacilli</taxon>
        <taxon>Lactobacillales</taxon>
        <taxon>Streptococcaceae</taxon>
        <taxon>Streptococcus</taxon>
    </lineage>
</organism>